<proteinExistence type="evidence at protein level"/>
<keyword id="KW-0012">Acyltransferase</keyword>
<keyword id="KW-0028">Amino-acid biosynthesis</keyword>
<keyword id="KW-0963">Cytoplasm</keyword>
<keyword id="KW-0486">Methionine biosynthesis</keyword>
<keyword id="KW-1185">Reference proteome</keyword>
<keyword id="KW-0808">Transferase</keyword>
<gene>
    <name evidence="1 3" type="primary">metAS</name>
    <name evidence="4" type="ordered locus">Noc_2703</name>
</gene>
<reference key="1">
    <citation type="journal article" date="2006" name="Appl. Environ. Microbiol.">
        <title>Complete genome sequence of the marine, chemolithoautotrophic, ammonia-oxidizing bacterium Nitrosococcus oceani ATCC 19707.</title>
        <authorList>
            <person name="Klotz M.G."/>
            <person name="Arp D.J."/>
            <person name="Chain P.S.G."/>
            <person name="El-Sheikh A.F."/>
            <person name="Hauser L.J."/>
            <person name="Hommes N.G."/>
            <person name="Larimer F.W."/>
            <person name="Malfatti S.A."/>
            <person name="Norton J.M."/>
            <person name="Poret-Peterson A.T."/>
            <person name="Vergez L.M."/>
            <person name="Ward B.B."/>
        </authorList>
    </citation>
    <scope>NUCLEOTIDE SEQUENCE [LARGE SCALE GENOMIC DNA]</scope>
    <source>
        <strain>ATCC 19707 / BCRC 17464 / JCM 30415 / NCIMB 11848 / C-107</strain>
    </source>
</reference>
<reference key="2">
    <citation type="journal article" date="2017" name="Nat. Chem. Biol.">
        <title>Parallel evolution of non-homologous isofunctional enzymes in methionine biosynthesis.</title>
        <authorList>
            <person name="Bastard K."/>
            <person name="Perret A."/>
            <person name="Mariage A."/>
            <person name="Bessonnet T."/>
            <person name="Pinet-Turpault A."/>
            <person name="Petit J.L."/>
            <person name="Darii E."/>
            <person name="Bazire P."/>
            <person name="Vergne-Vaxelaire C."/>
            <person name="Brewee C."/>
            <person name="Debard A."/>
            <person name="Pellouin V."/>
            <person name="Besnard-Gonnet M."/>
            <person name="Artiguenave F."/>
            <person name="Medigue C."/>
            <person name="Vallenet D."/>
            <person name="Danchin A."/>
            <person name="Zaparucha A."/>
            <person name="Weissenbach J."/>
            <person name="Salanoubat M."/>
            <person name="de Berardinis V."/>
        </authorList>
    </citation>
    <scope>FUNCTION</scope>
    <scope>CATALYTIC ACTIVITY</scope>
</reference>
<sequence>MPLVANSDLPAFERLREEGETVIPRDVALHQDIREMHIGLLNMMPDAALAATERQFFRLIGESNQIAQFYIHPFTLKEIQRSLEANHYVERYYQTFEQIQAEGLDALIITGANVTQPQLSLEPFWKPLIKVISWAYENVTSTLCSCLATHAVLDFRYGQKRRRLSSKRWGVYSHRVVNRSHPLVRGVNTRFDVPHSRFNEISRDQFEAAGLHVLAESEKGGAHLAVSEDLFRIVFCQGHPEYDSISLLKEYKREILRFASGQRDNYPPFPENYFSPKIQAILEEYQEQIIIARDKDLPLPQLPEPLIVDYLDNTWHDTAEAIINNWMGNVYQITHSDRKRPFMEDIAPDDPLGLRRPT</sequence>
<accession>Q3J7P0</accession>
<name>METAS_NITOC</name>
<evidence type="ECO:0000255" key="1">
    <source>
        <dbReference type="HAMAP-Rule" id="MF_00295"/>
    </source>
</evidence>
<evidence type="ECO:0000269" key="2">
    <source>
    </source>
</evidence>
<evidence type="ECO:0000303" key="3">
    <source>
    </source>
</evidence>
<evidence type="ECO:0000312" key="4">
    <source>
        <dbReference type="EMBL" id="ABA59156.1"/>
    </source>
</evidence>
<organism>
    <name type="scientific">Nitrosococcus oceani (strain ATCC 19707 / BCRC 17464 / JCM 30415 / NCIMB 11848 / C-107)</name>
    <dbReference type="NCBI Taxonomy" id="323261"/>
    <lineage>
        <taxon>Bacteria</taxon>
        <taxon>Pseudomonadati</taxon>
        <taxon>Pseudomonadota</taxon>
        <taxon>Gammaproteobacteria</taxon>
        <taxon>Chromatiales</taxon>
        <taxon>Chromatiaceae</taxon>
        <taxon>Nitrosococcus</taxon>
    </lineage>
</organism>
<feature type="chain" id="PRO_0000440354" description="Homoserine O-succinyltransferase">
    <location>
        <begin position="1"/>
        <end position="358"/>
    </location>
</feature>
<feature type="active site" description="Acyl-thioester intermediate" evidence="1">
    <location>
        <position position="146"/>
    </location>
</feature>
<feature type="active site" description="Proton acceptor" evidence="1">
    <location>
        <position position="239"/>
    </location>
</feature>
<feature type="active site" evidence="1">
    <location>
        <position position="241"/>
    </location>
</feature>
<feature type="binding site" evidence="1">
    <location>
        <position position="167"/>
    </location>
    <ligand>
        <name>substrate</name>
    </ligand>
</feature>
<feature type="binding site" evidence="1">
    <location>
        <position position="196"/>
    </location>
    <ligand>
        <name>substrate</name>
    </ligand>
</feature>
<feature type="binding site" evidence="1">
    <location>
        <position position="253"/>
    </location>
    <ligand>
        <name>substrate</name>
    </ligand>
</feature>
<feature type="site" description="Important for acyl-CoA specificity" evidence="1">
    <location>
        <position position="113"/>
    </location>
</feature>
<feature type="site" description="Important for acyl-CoA specificity" evidence="1">
    <location>
        <position position="147"/>
    </location>
</feature>
<feature type="site" description="Important for substrate specificity" evidence="1">
    <location>
        <position position="196"/>
    </location>
</feature>
<dbReference type="EC" id="2.3.1.46" evidence="1 2"/>
<dbReference type="EMBL" id="CP000127">
    <property type="protein sequence ID" value="ABA59156.1"/>
    <property type="molecule type" value="Genomic_DNA"/>
</dbReference>
<dbReference type="SMR" id="Q3J7P0"/>
<dbReference type="FunCoup" id="Q3J7P0">
    <property type="interactions" value="113"/>
</dbReference>
<dbReference type="STRING" id="323261.Noc_2703"/>
<dbReference type="KEGG" id="noc:Noc_2703"/>
<dbReference type="eggNOG" id="COG1897">
    <property type="taxonomic scope" value="Bacteria"/>
</dbReference>
<dbReference type="HOGENOM" id="CLU_057851_0_1_6"/>
<dbReference type="InParanoid" id="Q3J7P0"/>
<dbReference type="UniPathway" id="UPA00051">
    <property type="reaction ID" value="UER00075"/>
</dbReference>
<dbReference type="Proteomes" id="UP000006838">
    <property type="component" value="Chromosome"/>
</dbReference>
<dbReference type="GO" id="GO:0005737">
    <property type="term" value="C:cytoplasm"/>
    <property type="evidence" value="ECO:0007669"/>
    <property type="project" value="UniProtKB-SubCell"/>
</dbReference>
<dbReference type="GO" id="GO:0004414">
    <property type="term" value="F:homoserine O-acetyltransferase activity"/>
    <property type="evidence" value="ECO:0007669"/>
    <property type="project" value="UniProtKB-UniRule"/>
</dbReference>
<dbReference type="GO" id="GO:0008899">
    <property type="term" value="F:homoserine O-succinyltransferase activity"/>
    <property type="evidence" value="ECO:0007669"/>
    <property type="project" value="UniProtKB-EC"/>
</dbReference>
<dbReference type="GO" id="GO:0009086">
    <property type="term" value="P:methionine biosynthetic process"/>
    <property type="evidence" value="ECO:0007669"/>
    <property type="project" value="UniProtKB-UniRule"/>
</dbReference>
<dbReference type="Gene3D" id="3.40.50.880">
    <property type="match status" value="1"/>
</dbReference>
<dbReference type="HAMAP" id="MF_00295">
    <property type="entry name" value="MetA_acyltransf"/>
    <property type="match status" value="1"/>
</dbReference>
<dbReference type="InterPro" id="IPR029062">
    <property type="entry name" value="Class_I_gatase-like"/>
</dbReference>
<dbReference type="InterPro" id="IPR033752">
    <property type="entry name" value="MetA_family"/>
</dbReference>
<dbReference type="NCBIfam" id="NF003776">
    <property type="entry name" value="PRK05368.1-3"/>
    <property type="match status" value="1"/>
</dbReference>
<dbReference type="PANTHER" id="PTHR20919">
    <property type="entry name" value="HOMOSERINE O-SUCCINYLTRANSFERASE"/>
    <property type="match status" value="1"/>
</dbReference>
<dbReference type="PANTHER" id="PTHR20919:SF0">
    <property type="entry name" value="HOMOSERINE O-SUCCINYLTRANSFERASE"/>
    <property type="match status" value="1"/>
</dbReference>
<dbReference type="Pfam" id="PF04204">
    <property type="entry name" value="HTS"/>
    <property type="match status" value="1"/>
</dbReference>
<dbReference type="PIRSF" id="PIRSF000450">
    <property type="entry name" value="H_ser_succinyltr"/>
    <property type="match status" value="1"/>
</dbReference>
<dbReference type="SUPFAM" id="SSF52317">
    <property type="entry name" value="Class I glutamine amidotransferase-like"/>
    <property type="match status" value="1"/>
</dbReference>
<protein>
    <recommendedName>
        <fullName evidence="1">Homoserine O-succinyltransferase</fullName>
        <shortName evidence="1 3">HST</shortName>
        <ecNumber evidence="1 2">2.3.1.46</ecNumber>
    </recommendedName>
    <alternativeName>
        <fullName evidence="1">Homoserine transsuccinylase</fullName>
        <shortName evidence="1">HTS</shortName>
    </alternativeName>
</protein>
<comment type="function">
    <text evidence="1 2">Transfers a succinyl group from succinyl-CoA to L-homoserine, forming succinyl-L-homoserine.</text>
</comment>
<comment type="catalytic activity">
    <reaction evidence="1 2">
        <text>L-homoserine + succinyl-CoA = O-succinyl-L-homoserine + CoA</text>
        <dbReference type="Rhea" id="RHEA:22008"/>
        <dbReference type="ChEBI" id="CHEBI:57287"/>
        <dbReference type="ChEBI" id="CHEBI:57292"/>
        <dbReference type="ChEBI" id="CHEBI:57476"/>
        <dbReference type="ChEBI" id="CHEBI:57661"/>
        <dbReference type="EC" id="2.3.1.46"/>
    </reaction>
</comment>
<comment type="pathway">
    <text evidence="1">Amino-acid biosynthesis; L-methionine biosynthesis via de novo pathway; O-succinyl-L-homoserine from L-homoserine: step 1/1.</text>
</comment>
<comment type="subcellular location">
    <subcellularLocation>
        <location evidence="1">Cytoplasm</location>
    </subcellularLocation>
</comment>
<comment type="similarity">
    <text evidence="1">Belongs to the MetA family.</text>
</comment>